<reference key="1">
    <citation type="journal article" date="2008" name="DNA Res.">
        <title>Comparative genome analysis of Lactobacillus reuteri and Lactobacillus fermentum reveal a genomic island for reuterin and cobalamin production.</title>
        <authorList>
            <person name="Morita H."/>
            <person name="Toh H."/>
            <person name="Fukuda S."/>
            <person name="Horikawa H."/>
            <person name="Oshima K."/>
            <person name="Suzuki T."/>
            <person name="Murakami M."/>
            <person name="Hisamatsu S."/>
            <person name="Kato Y."/>
            <person name="Takizawa T."/>
            <person name="Fukuoka H."/>
            <person name="Yoshimura T."/>
            <person name="Itoh K."/>
            <person name="O'Sullivan D.J."/>
            <person name="McKay L.L."/>
            <person name="Ohno H."/>
            <person name="Kikuchi J."/>
            <person name="Masaoka T."/>
            <person name="Hattori M."/>
        </authorList>
    </citation>
    <scope>NUCLEOTIDE SEQUENCE [LARGE SCALE GENOMIC DNA]</scope>
    <source>
        <strain>NBRC 3956 / LMG 18251</strain>
    </source>
</reference>
<organism>
    <name type="scientific">Limosilactobacillus fermentum (strain NBRC 3956 / LMG 18251)</name>
    <name type="common">Lactobacillus fermentum</name>
    <dbReference type="NCBI Taxonomy" id="334390"/>
    <lineage>
        <taxon>Bacteria</taxon>
        <taxon>Bacillati</taxon>
        <taxon>Bacillota</taxon>
        <taxon>Bacilli</taxon>
        <taxon>Lactobacillales</taxon>
        <taxon>Lactobacillaceae</taxon>
        <taxon>Limosilactobacillus</taxon>
    </lineage>
</organism>
<comment type="function">
    <text evidence="1">Endonuclease that specifically degrades the RNA of RNA-DNA hybrids.</text>
</comment>
<comment type="catalytic activity">
    <reaction evidence="1">
        <text>Endonucleolytic cleavage to 5'-phosphomonoester.</text>
        <dbReference type="EC" id="3.1.26.4"/>
    </reaction>
</comment>
<comment type="cofactor">
    <cofactor evidence="1">
        <name>Mn(2+)</name>
        <dbReference type="ChEBI" id="CHEBI:29035"/>
    </cofactor>
    <cofactor evidence="1">
        <name>Mg(2+)</name>
        <dbReference type="ChEBI" id="CHEBI:18420"/>
    </cofactor>
    <text evidence="1">Manganese or magnesium. Binds 1 divalent metal ion per monomer in the absence of substrate. May bind a second metal ion after substrate binding.</text>
</comment>
<comment type="subcellular location">
    <subcellularLocation>
        <location evidence="1">Cytoplasm</location>
    </subcellularLocation>
</comment>
<comment type="similarity">
    <text evidence="1">Belongs to the RNase HII family.</text>
</comment>
<sequence>MSKQSVAQVRALLSSITDPQDPRLAEFKDDPRKGVQAALNQFAKRLEKRAEARAAFLNRFRYENQLWQAGHQYVAGIDEVGRGPLAGPVVTCAVVLDSQFDLVGVTDSKQLSRHEREQLYLRILDEAVEVSLAVSPAQEIDRLNIYAATQTAMIRSVKALHHQPSHLIVDAVPLDIPVPQTTLIKGDQKSISVAAASIVAKEYRDHLMAIYDRLYPGYGFKDNMGYGTAAHLAGLEQLGACPIHRRTFRPVPDYVN</sequence>
<name>RNH2_LIMF3</name>
<feature type="chain" id="PRO_1000091632" description="Ribonuclease HII">
    <location>
        <begin position="1"/>
        <end position="256"/>
    </location>
</feature>
<feature type="domain" description="RNase H type-2" evidence="2">
    <location>
        <begin position="72"/>
        <end position="256"/>
    </location>
</feature>
<feature type="binding site" evidence="1">
    <location>
        <position position="78"/>
    </location>
    <ligand>
        <name>a divalent metal cation</name>
        <dbReference type="ChEBI" id="CHEBI:60240"/>
    </ligand>
</feature>
<feature type="binding site" evidence="1">
    <location>
        <position position="79"/>
    </location>
    <ligand>
        <name>a divalent metal cation</name>
        <dbReference type="ChEBI" id="CHEBI:60240"/>
    </ligand>
</feature>
<feature type="binding site" evidence="1">
    <location>
        <position position="170"/>
    </location>
    <ligand>
        <name>a divalent metal cation</name>
        <dbReference type="ChEBI" id="CHEBI:60240"/>
    </ligand>
</feature>
<protein>
    <recommendedName>
        <fullName evidence="1">Ribonuclease HII</fullName>
        <shortName evidence="1">RNase HII</shortName>
        <ecNumber evidence="1">3.1.26.4</ecNumber>
    </recommendedName>
</protein>
<proteinExistence type="inferred from homology"/>
<evidence type="ECO:0000255" key="1">
    <source>
        <dbReference type="HAMAP-Rule" id="MF_00052"/>
    </source>
</evidence>
<evidence type="ECO:0000255" key="2">
    <source>
        <dbReference type="PROSITE-ProRule" id="PRU01319"/>
    </source>
</evidence>
<keyword id="KW-0963">Cytoplasm</keyword>
<keyword id="KW-0255">Endonuclease</keyword>
<keyword id="KW-0378">Hydrolase</keyword>
<keyword id="KW-0464">Manganese</keyword>
<keyword id="KW-0479">Metal-binding</keyword>
<keyword id="KW-0540">Nuclease</keyword>
<keyword id="KW-1185">Reference proteome</keyword>
<accession>B2GC51</accession>
<gene>
    <name evidence="1" type="primary">rnhB</name>
    <name type="ordered locus">LAF_0897</name>
</gene>
<dbReference type="EC" id="3.1.26.4" evidence="1"/>
<dbReference type="EMBL" id="AP008937">
    <property type="protein sequence ID" value="BAG27233.1"/>
    <property type="molecule type" value="Genomic_DNA"/>
</dbReference>
<dbReference type="RefSeq" id="WP_012391201.1">
    <property type="nucleotide sequence ID" value="NC_010610.1"/>
</dbReference>
<dbReference type="SMR" id="B2GC51"/>
<dbReference type="GeneID" id="83714712"/>
<dbReference type="KEGG" id="lfe:LAF_0897"/>
<dbReference type="eggNOG" id="COG0164">
    <property type="taxonomic scope" value="Bacteria"/>
</dbReference>
<dbReference type="HOGENOM" id="CLU_036532_2_1_9"/>
<dbReference type="Proteomes" id="UP000001697">
    <property type="component" value="Chromosome"/>
</dbReference>
<dbReference type="GO" id="GO:0005737">
    <property type="term" value="C:cytoplasm"/>
    <property type="evidence" value="ECO:0007669"/>
    <property type="project" value="UniProtKB-SubCell"/>
</dbReference>
<dbReference type="GO" id="GO:0032299">
    <property type="term" value="C:ribonuclease H2 complex"/>
    <property type="evidence" value="ECO:0007669"/>
    <property type="project" value="TreeGrafter"/>
</dbReference>
<dbReference type="GO" id="GO:0030145">
    <property type="term" value="F:manganese ion binding"/>
    <property type="evidence" value="ECO:0007669"/>
    <property type="project" value="UniProtKB-UniRule"/>
</dbReference>
<dbReference type="GO" id="GO:0003723">
    <property type="term" value="F:RNA binding"/>
    <property type="evidence" value="ECO:0007669"/>
    <property type="project" value="InterPro"/>
</dbReference>
<dbReference type="GO" id="GO:0004523">
    <property type="term" value="F:RNA-DNA hybrid ribonuclease activity"/>
    <property type="evidence" value="ECO:0007669"/>
    <property type="project" value="UniProtKB-UniRule"/>
</dbReference>
<dbReference type="GO" id="GO:0043137">
    <property type="term" value="P:DNA replication, removal of RNA primer"/>
    <property type="evidence" value="ECO:0007669"/>
    <property type="project" value="TreeGrafter"/>
</dbReference>
<dbReference type="GO" id="GO:0006298">
    <property type="term" value="P:mismatch repair"/>
    <property type="evidence" value="ECO:0007669"/>
    <property type="project" value="TreeGrafter"/>
</dbReference>
<dbReference type="CDD" id="cd07182">
    <property type="entry name" value="RNase_HII_bacteria_HII_like"/>
    <property type="match status" value="1"/>
</dbReference>
<dbReference type="FunFam" id="3.30.420.10:FF:000006">
    <property type="entry name" value="Ribonuclease HII"/>
    <property type="match status" value="1"/>
</dbReference>
<dbReference type="Gene3D" id="3.30.420.10">
    <property type="entry name" value="Ribonuclease H-like superfamily/Ribonuclease H"/>
    <property type="match status" value="1"/>
</dbReference>
<dbReference type="HAMAP" id="MF_00052_B">
    <property type="entry name" value="RNase_HII_B"/>
    <property type="match status" value="1"/>
</dbReference>
<dbReference type="InterPro" id="IPR022898">
    <property type="entry name" value="RNase_HII"/>
</dbReference>
<dbReference type="InterPro" id="IPR001352">
    <property type="entry name" value="RNase_HII/HIII"/>
</dbReference>
<dbReference type="InterPro" id="IPR024567">
    <property type="entry name" value="RNase_HII/HIII_dom"/>
</dbReference>
<dbReference type="InterPro" id="IPR012337">
    <property type="entry name" value="RNaseH-like_sf"/>
</dbReference>
<dbReference type="InterPro" id="IPR036397">
    <property type="entry name" value="RNaseH_sf"/>
</dbReference>
<dbReference type="NCBIfam" id="NF000594">
    <property type="entry name" value="PRK00015.1-1"/>
    <property type="match status" value="1"/>
</dbReference>
<dbReference type="NCBIfam" id="NF000595">
    <property type="entry name" value="PRK00015.1-3"/>
    <property type="match status" value="1"/>
</dbReference>
<dbReference type="PANTHER" id="PTHR10954">
    <property type="entry name" value="RIBONUCLEASE H2 SUBUNIT A"/>
    <property type="match status" value="1"/>
</dbReference>
<dbReference type="PANTHER" id="PTHR10954:SF18">
    <property type="entry name" value="RIBONUCLEASE HII"/>
    <property type="match status" value="1"/>
</dbReference>
<dbReference type="Pfam" id="PF01351">
    <property type="entry name" value="RNase_HII"/>
    <property type="match status" value="1"/>
</dbReference>
<dbReference type="SUPFAM" id="SSF53098">
    <property type="entry name" value="Ribonuclease H-like"/>
    <property type="match status" value="1"/>
</dbReference>
<dbReference type="PROSITE" id="PS51975">
    <property type="entry name" value="RNASE_H_2"/>
    <property type="match status" value="1"/>
</dbReference>